<dbReference type="EMBL" id="BA000036">
    <property type="protein sequence ID" value="BAB99361.1"/>
    <property type="molecule type" value="Genomic_DNA"/>
</dbReference>
<dbReference type="EMBL" id="BX927153">
    <property type="protein sequence ID" value="CAF20309.1"/>
    <property type="status" value="ALT_INIT"/>
    <property type="molecule type" value="Genomic_DNA"/>
</dbReference>
<dbReference type="RefSeq" id="NP_601174.1">
    <property type="nucleotide sequence ID" value="NC_003450.3"/>
</dbReference>
<dbReference type="SMR" id="Q8NP53"/>
<dbReference type="STRING" id="196627.cg2158"/>
<dbReference type="KEGG" id="cgb:cg2158"/>
<dbReference type="KEGG" id="cgl:Cgl1968"/>
<dbReference type="PATRIC" id="fig|196627.13.peg.1905"/>
<dbReference type="eggNOG" id="COG1674">
    <property type="taxonomic scope" value="Bacteria"/>
</dbReference>
<dbReference type="HOGENOM" id="CLU_001981_2_1_11"/>
<dbReference type="OrthoDB" id="9807790at2"/>
<dbReference type="BioCyc" id="CORYNE:G18NG-11560-MONOMER"/>
<dbReference type="Proteomes" id="UP000000582">
    <property type="component" value="Chromosome"/>
</dbReference>
<dbReference type="Proteomes" id="UP000001009">
    <property type="component" value="Chromosome"/>
</dbReference>
<dbReference type="GO" id="GO:0005886">
    <property type="term" value="C:plasma membrane"/>
    <property type="evidence" value="ECO:0007669"/>
    <property type="project" value="UniProtKB-SubCell"/>
</dbReference>
<dbReference type="GO" id="GO:0005524">
    <property type="term" value="F:ATP binding"/>
    <property type="evidence" value="ECO:0007669"/>
    <property type="project" value="UniProtKB-KW"/>
</dbReference>
<dbReference type="GO" id="GO:0003677">
    <property type="term" value="F:DNA binding"/>
    <property type="evidence" value="ECO:0007669"/>
    <property type="project" value="UniProtKB-KW"/>
</dbReference>
<dbReference type="GO" id="GO:0051301">
    <property type="term" value="P:cell division"/>
    <property type="evidence" value="ECO:0007669"/>
    <property type="project" value="UniProtKB-KW"/>
</dbReference>
<dbReference type="GO" id="GO:0007059">
    <property type="term" value="P:chromosome segregation"/>
    <property type="evidence" value="ECO:0007669"/>
    <property type="project" value="UniProtKB-KW"/>
</dbReference>
<dbReference type="CDD" id="cd01127">
    <property type="entry name" value="TrwB_TraG_TraD_VirD4"/>
    <property type="match status" value="1"/>
</dbReference>
<dbReference type="FunFam" id="3.40.50.300:FF:000209">
    <property type="entry name" value="Cell division protein FtsK"/>
    <property type="match status" value="1"/>
</dbReference>
<dbReference type="Gene3D" id="3.30.980.40">
    <property type="match status" value="1"/>
</dbReference>
<dbReference type="Gene3D" id="3.40.50.300">
    <property type="entry name" value="P-loop containing nucleotide triphosphate hydrolases"/>
    <property type="match status" value="1"/>
</dbReference>
<dbReference type="Gene3D" id="1.10.10.10">
    <property type="entry name" value="Winged helix-like DNA-binding domain superfamily/Winged helix DNA-binding domain"/>
    <property type="match status" value="1"/>
</dbReference>
<dbReference type="InterPro" id="IPR050206">
    <property type="entry name" value="FtsK/SpoIIIE/SftA"/>
</dbReference>
<dbReference type="InterPro" id="IPR025199">
    <property type="entry name" value="FtsK_4TM"/>
</dbReference>
<dbReference type="InterPro" id="IPR041027">
    <property type="entry name" value="FtsK_alpha"/>
</dbReference>
<dbReference type="InterPro" id="IPR002543">
    <property type="entry name" value="FtsK_dom"/>
</dbReference>
<dbReference type="InterPro" id="IPR018541">
    <property type="entry name" value="Ftsk_gamma"/>
</dbReference>
<dbReference type="InterPro" id="IPR027417">
    <property type="entry name" value="P-loop_NTPase"/>
</dbReference>
<dbReference type="InterPro" id="IPR036388">
    <property type="entry name" value="WH-like_DNA-bd_sf"/>
</dbReference>
<dbReference type="InterPro" id="IPR036390">
    <property type="entry name" value="WH_DNA-bd_sf"/>
</dbReference>
<dbReference type="PANTHER" id="PTHR22683:SF41">
    <property type="entry name" value="DNA TRANSLOCASE FTSK"/>
    <property type="match status" value="1"/>
</dbReference>
<dbReference type="PANTHER" id="PTHR22683">
    <property type="entry name" value="SPORULATION PROTEIN RELATED"/>
    <property type="match status" value="1"/>
</dbReference>
<dbReference type="Pfam" id="PF13491">
    <property type="entry name" value="FtsK_4TM"/>
    <property type="match status" value="1"/>
</dbReference>
<dbReference type="Pfam" id="PF17854">
    <property type="entry name" value="FtsK_alpha"/>
    <property type="match status" value="1"/>
</dbReference>
<dbReference type="Pfam" id="PF09397">
    <property type="entry name" value="FtsK_gamma"/>
    <property type="match status" value="1"/>
</dbReference>
<dbReference type="Pfam" id="PF01580">
    <property type="entry name" value="FtsK_SpoIIIE"/>
    <property type="match status" value="1"/>
</dbReference>
<dbReference type="SMART" id="SM00843">
    <property type="entry name" value="Ftsk_gamma"/>
    <property type="match status" value="1"/>
</dbReference>
<dbReference type="SUPFAM" id="SSF52540">
    <property type="entry name" value="P-loop containing nucleoside triphosphate hydrolases"/>
    <property type="match status" value="1"/>
</dbReference>
<dbReference type="SUPFAM" id="SSF46785">
    <property type="entry name" value="Winged helix' DNA-binding domain"/>
    <property type="match status" value="1"/>
</dbReference>
<dbReference type="PROSITE" id="PS50901">
    <property type="entry name" value="FTSK"/>
    <property type="match status" value="1"/>
</dbReference>
<feature type="chain" id="PRO_0000098255" description="DNA translocase FtsK">
    <location>
        <begin position="1"/>
        <end position="921"/>
    </location>
</feature>
<feature type="transmembrane region" description="Helical" evidence="2">
    <location>
        <begin position="69"/>
        <end position="89"/>
    </location>
</feature>
<feature type="transmembrane region" description="Helical" evidence="2">
    <location>
        <begin position="105"/>
        <end position="125"/>
    </location>
</feature>
<feature type="transmembrane region" description="Helical" evidence="2">
    <location>
        <begin position="137"/>
        <end position="157"/>
    </location>
</feature>
<feature type="transmembrane region" description="Helical" evidence="2">
    <location>
        <begin position="182"/>
        <end position="202"/>
    </location>
</feature>
<feature type="transmembrane region" description="Helical" evidence="2">
    <location>
        <begin position="205"/>
        <end position="225"/>
    </location>
</feature>
<feature type="topological domain" description="Cytoplasmic" evidence="2">
    <location>
        <begin position="226"/>
        <end position="921"/>
    </location>
</feature>
<feature type="domain" description="FtsK" evidence="3">
    <location>
        <begin position="533"/>
        <end position="733"/>
    </location>
</feature>
<feature type="region of interest" description="Disordered" evidence="4">
    <location>
        <begin position="28"/>
        <end position="55"/>
    </location>
</feature>
<feature type="region of interest" description="Disordered" evidence="4">
    <location>
        <begin position="246"/>
        <end position="391"/>
    </location>
</feature>
<feature type="compositionally biased region" description="Acidic residues" evidence="4">
    <location>
        <begin position="43"/>
        <end position="53"/>
    </location>
</feature>
<feature type="compositionally biased region" description="Pro residues" evidence="4">
    <location>
        <begin position="271"/>
        <end position="290"/>
    </location>
</feature>
<feature type="compositionally biased region" description="Basic and acidic residues" evidence="4">
    <location>
        <begin position="300"/>
        <end position="319"/>
    </location>
</feature>
<feature type="compositionally biased region" description="Acidic residues" evidence="4">
    <location>
        <begin position="332"/>
        <end position="344"/>
    </location>
</feature>
<feature type="compositionally biased region" description="Low complexity" evidence="4">
    <location>
        <begin position="345"/>
        <end position="356"/>
    </location>
</feature>
<feature type="compositionally biased region" description="Basic and acidic residues" evidence="4">
    <location>
        <begin position="368"/>
        <end position="378"/>
    </location>
</feature>
<feature type="binding site" evidence="3">
    <location>
        <begin position="553"/>
        <end position="558"/>
    </location>
    <ligand>
        <name>ATP</name>
        <dbReference type="ChEBI" id="CHEBI:30616"/>
    </ligand>
</feature>
<protein>
    <recommendedName>
        <fullName>DNA translocase FtsK</fullName>
    </recommendedName>
</protein>
<gene>
    <name type="primary">ftsK</name>
    <name type="ordered locus">Cgl1968</name>
    <name type="ordered locus">cg2158</name>
</gene>
<evidence type="ECO:0000250" key="1"/>
<evidence type="ECO:0000255" key="2"/>
<evidence type="ECO:0000255" key="3">
    <source>
        <dbReference type="PROSITE-ProRule" id="PRU00289"/>
    </source>
</evidence>
<evidence type="ECO:0000256" key="4">
    <source>
        <dbReference type="SAM" id="MobiDB-lite"/>
    </source>
</evidence>
<evidence type="ECO:0000305" key="5"/>
<proteinExistence type="inferred from homology"/>
<keyword id="KW-0067">ATP-binding</keyword>
<keyword id="KW-0131">Cell cycle</keyword>
<keyword id="KW-0132">Cell division</keyword>
<keyword id="KW-1003">Cell membrane</keyword>
<keyword id="KW-0159">Chromosome partition</keyword>
<keyword id="KW-0238">DNA-binding</keyword>
<keyword id="KW-0472">Membrane</keyword>
<keyword id="KW-0547">Nucleotide-binding</keyword>
<keyword id="KW-1185">Reference proteome</keyword>
<keyword id="KW-0812">Transmembrane</keyword>
<keyword id="KW-1133">Transmembrane helix</keyword>
<comment type="function">
    <text evidence="1">Essential cell division protein that coordinates cell division and chromosome segregation. The N-terminus is involved in assembly of the cell-division machinery. The C-terminus functions as a DNA motor that moves dsDNA in an ATP-dependent manner towards the dif recombination site, which is located within the replication terminus region. Required for activation of the Xer recombinase, allowing activation of chromosome unlinking by recombination (By similarity).</text>
</comment>
<comment type="subunit">
    <text evidence="1">Homohexamer. Forms a ring that surrounds DNA (By similarity).</text>
</comment>
<comment type="subcellular location">
    <subcellularLocation>
        <location evidence="1">Cell membrane</location>
        <topology evidence="1">Multi-pass membrane protein</topology>
    </subcellularLocation>
    <text evidence="1">Located at the septum.</text>
</comment>
<comment type="domain">
    <text evidence="1">Consists of an N-terminal domain, which is sufficient for the localization to the septal ring and is required for cell division, followed by a linker domain, and a C-terminal domain, which forms the translocation motor involved in chromosome segregation. The C-terminal domain can be further subdivided into alpha, beta and gamma subdomains. The alpha and beta subdomains form the DNA pump, and the gamma subdomain is a regulatory subdomain (By similarity).</text>
</comment>
<comment type="similarity">
    <text evidence="5">Belongs to the FtsK/SpoIIIE/SftA family.</text>
</comment>
<comment type="sequence caution" evidence="5">
    <conflict type="erroneous initiation">
        <sequence resource="EMBL-CDS" id="CAF20309"/>
    </conflict>
    <text>Extended N-terminus.</text>
</comment>
<name>FTSK_CORGL</name>
<sequence>MTRSIGELGRRRNEDVLDDFDDFEEEIATKPATRKSRSKAVEPEPEFDEDFDEQSGNRTSAYVEEHADGIALSLVGIAIVLGAAVWLGIGGPIGTFIADIVHLAIGAGAWILPVGLIGWAVALMLRYTPERQAQGRVMLGIGVIIVCMLALIHLFAGNPAEWEGRKTAGGAIGAWIGTPLELGFSVFLAVPILLLLLFWGALKTTGISIREFIEFAGGFFGFAGFNRDEDEFDEEDDDLYGHVERELESRASGRAPSRTPSRALPKAAPRRTPPLTPPPAPVPAPAPTPARRPAASLDKYPVDDAKAEAPAEPQVKQREASTSILKKPSVTETDEFPAVTEEDLAPAPASDAVAASRESMRQAIIARSGKDPVVEKKPAAPAPVAPTPADIVSDGDSTYVLPSADLLIPGEPAKLHSETNDRMIEAITDVFSEFNVDATVTGFSRGPTVTRYEIELGPGVKVSKITNLQSNIAYAVATENVRLLTPIPGKSAVGIEVPNSDREMVRLGDVLNARATVENKDSMLIGLGKDIEGDFVSYSVQKMPHLLVAGSTGSGKSAFVNSLLVSLLTRAKPEEVRLILVDPKMVELTPYEGIPHLITPIITQPKKAAAALQWLVEEMEQRYMDMKQTRVRHIKDFNRKIKSGEIETPPGSKREYRAYPYIVCVVDELADLMMTAPKEIEESIVRITQKARAAGIHLVLATQRPSVDVVTGLIKTNVPSRLAFATSSLTDSRVILDQGGAEKLIGMGDALFIPQGAGKPQRIQGAFVTDEEIQAVVDMAKAQRQPEYTDGVTEDKASEAKKIDADIGNDLEDLLEAVELVVTSQMGSTSMLQRKLRIGFAKAGRLMDLMETRGVVGPSEGSKAREVLVKPEELETILWMLKGADPADAPKEETWDDEVAAEAEEAANTTVVQADPSKGVC</sequence>
<reference key="1">
    <citation type="journal article" date="2003" name="Appl. Microbiol. Biotechnol.">
        <title>The Corynebacterium glutamicum genome: features and impacts on biotechnological processes.</title>
        <authorList>
            <person name="Ikeda M."/>
            <person name="Nakagawa S."/>
        </authorList>
    </citation>
    <scope>NUCLEOTIDE SEQUENCE [LARGE SCALE GENOMIC DNA]</scope>
    <source>
        <strain>ATCC 13032 / DSM 20300 / JCM 1318 / BCRC 11384 / CCUG 27702 / LMG 3730 / NBRC 12168 / NCIMB 10025 / NRRL B-2784 / 534</strain>
    </source>
</reference>
<reference key="2">
    <citation type="journal article" date="2003" name="J. Biotechnol.">
        <title>The complete Corynebacterium glutamicum ATCC 13032 genome sequence and its impact on the production of L-aspartate-derived amino acids and vitamins.</title>
        <authorList>
            <person name="Kalinowski J."/>
            <person name="Bathe B."/>
            <person name="Bartels D."/>
            <person name="Bischoff N."/>
            <person name="Bott M."/>
            <person name="Burkovski A."/>
            <person name="Dusch N."/>
            <person name="Eggeling L."/>
            <person name="Eikmanns B.J."/>
            <person name="Gaigalat L."/>
            <person name="Goesmann A."/>
            <person name="Hartmann M."/>
            <person name="Huthmacher K."/>
            <person name="Kraemer R."/>
            <person name="Linke B."/>
            <person name="McHardy A.C."/>
            <person name="Meyer F."/>
            <person name="Moeckel B."/>
            <person name="Pfefferle W."/>
            <person name="Puehler A."/>
            <person name="Rey D.A."/>
            <person name="Rueckert C."/>
            <person name="Rupp O."/>
            <person name="Sahm H."/>
            <person name="Wendisch V.F."/>
            <person name="Wiegraebe I."/>
            <person name="Tauch A."/>
        </authorList>
    </citation>
    <scope>NUCLEOTIDE SEQUENCE [LARGE SCALE GENOMIC DNA]</scope>
    <source>
        <strain>ATCC 13032 / DSM 20300 / JCM 1318 / BCRC 11384 / CCUG 27702 / LMG 3730 / NBRC 12168 / NCIMB 10025 / NRRL B-2784 / 534</strain>
    </source>
</reference>
<accession>Q8NP53</accession>
<organism>
    <name type="scientific">Corynebacterium glutamicum (strain ATCC 13032 / DSM 20300 / JCM 1318 / BCRC 11384 / CCUG 27702 / LMG 3730 / NBRC 12168 / NCIMB 10025 / NRRL B-2784 / 534)</name>
    <dbReference type="NCBI Taxonomy" id="196627"/>
    <lineage>
        <taxon>Bacteria</taxon>
        <taxon>Bacillati</taxon>
        <taxon>Actinomycetota</taxon>
        <taxon>Actinomycetes</taxon>
        <taxon>Mycobacteriales</taxon>
        <taxon>Corynebacteriaceae</taxon>
        <taxon>Corynebacterium</taxon>
    </lineage>
</organism>